<gene>
    <name evidence="1" type="primary">psd</name>
    <name type="ordered locus">GOX0282</name>
</gene>
<sequence>MSLIQSFKLVLSPPHRAATPFLLAGSLVGLLGRATPWRPTRLLGNAGIAFTAFCLYFFRDPKRVPPPRADLVLASADGRVTSVALVTPPAALEMGHTPVWRVSTFLSVLNVHINRMPAAGEVTKIAYHAGKFLNASFDKASEHNERNELRLTLPDGRNIGVVQIAGLIARRILCFVEEGDRVEAGERFGLIRFGSRTDVYLPPGVEPLVVEGQTMVGGETVLAKL</sequence>
<comment type="function">
    <text evidence="1">Catalyzes the formation of phosphatidylethanolamine (PtdEtn) from phosphatidylserine (PtdSer).</text>
</comment>
<comment type="catalytic activity">
    <reaction evidence="1">
        <text>a 1,2-diacyl-sn-glycero-3-phospho-L-serine + H(+) = a 1,2-diacyl-sn-glycero-3-phosphoethanolamine + CO2</text>
        <dbReference type="Rhea" id="RHEA:20828"/>
        <dbReference type="ChEBI" id="CHEBI:15378"/>
        <dbReference type="ChEBI" id="CHEBI:16526"/>
        <dbReference type="ChEBI" id="CHEBI:57262"/>
        <dbReference type="ChEBI" id="CHEBI:64612"/>
        <dbReference type="EC" id="4.1.1.65"/>
    </reaction>
</comment>
<comment type="cofactor">
    <cofactor evidence="1">
        <name>pyruvate</name>
        <dbReference type="ChEBI" id="CHEBI:15361"/>
    </cofactor>
    <text evidence="1">Binds 1 pyruvoyl group covalently per subunit.</text>
</comment>
<comment type="pathway">
    <text evidence="1">Phospholipid metabolism; phosphatidylethanolamine biosynthesis; phosphatidylethanolamine from CDP-diacylglycerol: step 2/2.</text>
</comment>
<comment type="subunit">
    <text evidence="1">Heterodimer of a large membrane-associated beta subunit and a small pyruvoyl-containing alpha subunit.</text>
</comment>
<comment type="subcellular location">
    <subcellularLocation>
        <location evidence="1">Cell membrane</location>
        <topology evidence="1">Peripheral membrane protein</topology>
    </subcellularLocation>
</comment>
<comment type="PTM">
    <text evidence="1">Is synthesized initially as an inactive proenzyme. Formation of the active enzyme involves a self-maturation process in which the active site pyruvoyl group is generated from an internal serine residue via an autocatalytic post-translational modification. Two non-identical subunits are generated from the proenzyme in this reaction, and the pyruvate is formed at the N-terminus of the alpha chain, which is derived from the carboxyl end of the proenzyme. The post-translation cleavage follows an unusual pathway, termed non-hydrolytic serinolysis, in which the side chain hydroxyl group of the serine supplies its oxygen atom to form the C-terminus of the beta chain, while the remainder of the serine residue undergoes an oxidative deamination to produce ammonia and the pyruvoyl prosthetic group on the alpha chain.</text>
</comment>
<comment type="similarity">
    <text evidence="1">Belongs to the phosphatidylserine decarboxylase family. PSD-A subfamily.</text>
</comment>
<name>PSD_GLUOX</name>
<accession>Q5FU81</accession>
<evidence type="ECO:0000255" key="1">
    <source>
        <dbReference type="HAMAP-Rule" id="MF_00664"/>
    </source>
</evidence>
<reference key="1">
    <citation type="journal article" date="2005" name="Nat. Biotechnol.">
        <title>Complete genome sequence of the acetic acid bacterium Gluconobacter oxydans.</title>
        <authorList>
            <person name="Prust C."/>
            <person name="Hoffmeister M."/>
            <person name="Liesegang H."/>
            <person name="Wiezer A."/>
            <person name="Fricke W.F."/>
            <person name="Ehrenreich A."/>
            <person name="Gottschalk G."/>
            <person name="Deppenmeier U."/>
        </authorList>
    </citation>
    <scope>NUCLEOTIDE SEQUENCE [LARGE SCALE GENOMIC DNA]</scope>
    <source>
        <strain>621H</strain>
    </source>
</reference>
<organism>
    <name type="scientific">Gluconobacter oxydans (strain 621H)</name>
    <name type="common">Gluconobacter suboxydans</name>
    <dbReference type="NCBI Taxonomy" id="290633"/>
    <lineage>
        <taxon>Bacteria</taxon>
        <taxon>Pseudomonadati</taxon>
        <taxon>Pseudomonadota</taxon>
        <taxon>Alphaproteobacteria</taxon>
        <taxon>Acetobacterales</taxon>
        <taxon>Acetobacteraceae</taxon>
        <taxon>Gluconobacter</taxon>
    </lineage>
</organism>
<protein>
    <recommendedName>
        <fullName evidence="1">Phosphatidylserine decarboxylase proenzyme</fullName>
        <ecNumber evidence="1">4.1.1.65</ecNumber>
    </recommendedName>
    <component>
        <recommendedName>
            <fullName evidence="1">Phosphatidylserine decarboxylase alpha chain</fullName>
        </recommendedName>
    </component>
    <component>
        <recommendedName>
            <fullName evidence="1">Phosphatidylserine decarboxylase beta chain</fullName>
        </recommendedName>
    </component>
</protein>
<feature type="chain" id="PRO_0000262219" description="Phosphatidylserine decarboxylase beta chain" evidence="1">
    <location>
        <begin position="1"/>
        <end position="194"/>
    </location>
</feature>
<feature type="chain" id="PRO_0000262220" description="Phosphatidylserine decarboxylase alpha chain" evidence="1">
    <location>
        <begin position="195"/>
        <end position="225"/>
    </location>
</feature>
<feature type="active site" description="Schiff-base intermediate with substrate; via pyruvic acid" evidence="1">
    <location>
        <position position="195"/>
    </location>
</feature>
<feature type="site" description="Cleavage (non-hydrolytic); by autocatalysis" evidence="1">
    <location>
        <begin position="194"/>
        <end position="195"/>
    </location>
</feature>
<feature type="modified residue" description="Pyruvic acid (Ser); by autocatalysis" evidence="1">
    <location>
        <position position="195"/>
    </location>
</feature>
<dbReference type="EC" id="4.1.1.65" evidence="1"/>
<dbReference type="EMBL" id="CP000009">
    <property type="protein sequence ID" value="AAW60065.1"/>
    <property type="molecule type" value="Genomic_DNA"/>
</dbReference>
<dbReference type="RefSeq" id="WP_011251868.1">
    <property type="nucleotide sequence ID" value="NC_006677.1"/>
</dbReference>
<dbReference type="SMR" id="Q5FU81"/>
<dbReference type="STRING" id="290633.GOX0282"/>
<dbReference type="KEGG" id="gox:GOX0282"/>
<dbReference type="eggNOG" id="COG0688">
    <property type="taxonomic scope" value="Bacteria"/>
</dbReference>
<dbReference type="HOGENOM" id="CLU_072492_0_0_5"/>
<dbReference type="UniPathway" id="UPA00558">
    <property type="reaction ID" value="UER00616"/>
</dbReference>
<dbReference type="Proteomes" id="UP000006375">
    <property type="component" value="Chromosome"/>
</dbReference>
<dbReference type="GO" id="GO:0005886">
    <property type="term" value="C:plasma membrane"/>
    <property type="evidence" value="ECO:0007669"/>
    <property type="project" value="UniProtKB-SubCell"/>
</dbReference>
<dbReference type="GO" id="GO:0004609">
    <property type="term" value="F:phosphatidylserine decarboxylase activity"/>
    <property type="evidence" value="ECO:0007669"/>
    <property type="project" value="UniProtKB-UniRule"/>
</dbReference>
<dbReference type="GO" id="GO:0006646">
    <property type="term" value="P:phosphatidylethanolamine biosynthetic process"/>
    <property type="evidence" value="ECO:0007669"/>
    <property type="project" value="UniProtKB-UniRule"/>
</dbReference>
<dbReference type="HAMAP" id="MF_00664">
    <property type="entry name" value="PS_decarb_PSD_A"/>
    <property type="match status" value="1"/>
</dbReference>
<dbReference type="InterPro" id="IPR003817">
    <property type="entry name" value="PS_Dcarbxylase"/>
</dbReference>
<dbReference type="InterPro" id="IPR033175">
    <property type="entry name" value="PSD-A"/>
</dbReference>
<dbReference type="NCBIfam" id="NF003679">
    <property type="entry name" value="PRK05305.1-3"/>
    <property type="match status" value="1"/>
</dbReference>
<dbReference type="NCBIfam" id="NF003685">
    <property type="entry name" value="PRK05305.2-5"/>
    <property type="match status" value="1"/>
</dbReference>
<dbReference type="PANTHER" id="PTHR35809">
    <property type="entry name" value="ARCHAETIDYLSERINE DECARBOXYLASE PROENZYME-RELATED"/>
    <property type="match status" value="1"/>
</dbReference>
<dbReference type="PANTHER" id="PTHR35809:SF1">
    <property type="entry name" value="ARCHAETIDYLSERINE DECARBOXYLASE PROENZYME-RELATED"/>
    <property type="match status" value="1"/>
</dbReference>
<dbReference type="Pfam" id="PF02666">
    <property type="entry name" value="PS_Dcarbxylase"/>
    <property type="match status" value="1"/>
</dbReference>
<proteinExistence type="inferred from homology"/>
<keyword id="KW-1003">Cell membrane</keyword>
<keyword id="KW-0210">Decarboxylase</keyword>
<keyword id="KW-0444">Lipid biosynthesis</keyword>
<keyword id="KW-0443">Lipid metabolism</keyword>
<keyword id="KW-0456">Lyase</keyword>
<keyword id="KW-0472">Membrane</keyword>
<keyword id="KW-0594">Phospholipid biosynthesis</keyword>
<keyword id="KW-1208">Phospholipid metabolism</keyword>
<keyword id="KW-0670">Pyruvate</keyword>
<keyword id="KW-1185">Reference proteome</keyword>
<keyword id="KW-0865">Zymogen</keyword>